<accession>O59284</accession>
<evidence type="ECO:0000250" key="1">
    <source>
        <dbReference type="UniProtKB" id="P11759"/>
    </source>
</evidence>
<evidence type="ECO:0000250" key="2">
    <source>
        <dbReference type="UniProtKB" id="Q6LZC3"/>
    </source>
</evidence>
<evidence type="ECO:0000269" key="3">
    <source>
    </source>
</evidence>
<evidence type="ECO:0000269" key="4">
    <source>
    </source>
</evidence>
<evidence type="ECO:0000303" key="5">
    <source>
    </source>
</evidence>
<evidence type="ECO:0000305" key="6"/>
<evidence type="ECO:0000305" key="7">
    <source>
    </source>
</evidence>
<evidence type="ECO:0000312" key="8">
    <source>
        <dbReference type="EMBL" id="BAA30730.1"/>
    </source>
</evidence>
<evidence type="ECO:0007744" key="9">
    <source>
        <dbReference type="PDB" id="4R16"/>
    </source>
</evidence>
<evidence type="ECO:0007829" key="10">
    <source>
        <dbReference type="PDB" id="4R16"/>
    </source>
</evidence>
<comment type="function">
    <text evidence="2 7">Catalyzes the four-electron oxidation of UDP-N-acetyl-D-mannosamine (UDP-ManNAc), reducing NAD(+) and releasing UDP-N-acetylmannosaminuronic acid (UDP-ManNAcA).</text>
</comment>
<comment type="catalytic activity">
    <reaction evidence="2">
        <text>UDP-N-acetyl-alpha-D-mannosamine + 2 NAD(+) + H2O = UDP-N-acetyl-alpha-D-mannosaminouronate + 2 NADH + 3 H(+)</text>
        <dbReference type="Rhea" id="RHEA:25780"/>
        <dbReference type="ChEBI" id="CHEBI:15377"/>
        <dbReference type="ChEBI" id="CHEBI:15378"/>
        <dbReference type="ChEBI" id="CHEBI:57540"/>
        <dbReference type="ChEBI" id="CHEBI:57945"/>
        <dbReference type="ChEBI" id="CHEBI:68623"/>
        <dbReference type="ChEBI" id="CHEBI:70731"/>
        <dbReference type="EC" id="1.1.1.336"/>
    </reaction>
</comment>
<comment type="subunit">
    <text evidence="3">Homodimer.</text>
</comment>
<comment type="domain">
    <text evidence="4">The protomer folds into three distinct domains: an N-terminal nucleotide binding domain, a central helical domain involved in dimerization and a C-terminal substrate binding domain.</text>
</comment>
<comment type="similarity">
    <text evidence="6">Belongs to the UDP-glucose/GDP-mannose dehydrogenase family.</text>
</comment>
<keyword id="KW-0002">3D-structure</keyword>
<keyword id="KW-0520">NAD</keyword>
<keyword id="KW-0560">Oxidoreductase</keyword>
<sequence>MRIAVLGLGYIGLPTAIMFASSGYDVVGYDIRSEVIKKINSGVAHIIEPEIDRRLKEVLSLGKLKVTDRVEDLKGSNVFIICVQTPLSGDDPDLSYLERAIRTVAEVMDRGALVIIESTIPPGTTEKMARLLENLTGLREGVDFYVAHAPERVMPGRIFKELVYNSRIIGGVSEKAANLAEKLYRSFVKGRIFLTNATTAEMVKLMENTFRDVNIALANEFALLAHQYGVNVYEAIELANTHPRVKIHTPGIGVGGHCLPKDPYLLLSNAKEDFGLIRIARRINERMPAFAAGLLFEALEKANIKPSEAIIAVLGLAYKGGTDDTRNSPALKFVEIIRNSVKEVRTYDPYVRGTHDSLEKVVEGADAIVIATDHPEFKSVNWESIGKSMRHKIIIDGRNIIKEPPVGFIFRGIGRGDV</sequence>
<reference key="1">
    <citation type="journal article" date="1998" name="DNA Res.">
        <title>Complete sequence and gene organization of the genome of a hyper-thermophilic archaebacterium, Pyrococcus horikoshii OT3.</title>
        <authorList>
            <person name="Kawarabayasi Y."/>
            <person name="Sawada M."/>
            <person name="Horikawa H."/>
            <person name="Haikawa Y."/>
            <person name="Hino Y."/>
            <person name="Yamamoto S."/>
            <person name="Sekine M."/>
            <person name="Baba S."/>
            <person name="Kosugi H."/>
            <person name="Hosoyama A."/>
            <person name="Nagai Y."/>
            <person name="Sakai M."/>
            <person name="Ogura K."/>
            <person name="Otsuka R."/>
            <person name="Nakazawa H."/>
            <person name="Takamiya M."/>
            <person name="Ohfuku Y."/>
            <person name="Funahashi T."/>
            <person name="Tanaka T."/>
            <person name="Kudoh Y."/>
            <person name="Yamazaki J."/>
            <person name="Kushida N."/>
            <person name="Oguchi A."/>
            <person name="Aoki K."/>
            <person name="Yoshizawa T."/>
            <person name="Nakamura Y."/>
            <person name="Robb F.T."/>
            <person name="Horikoshi K."/>
            <person name="Masuchi Y."/>
            <person name="Shizuya H."/>
            <person name="Kikuchi H."/>
        </authorList>
    </citation>
    <scope>NUCLEOTIDE SEQUENCE [LARGE SCALE GENOMIC DNA]</scope>
    <source>
        <strain>ATCC 700860 / DSM 12428 / JCM 9974 / NBRC 100139 / OT-3</strain>
    </source>
</reference>
<reference key="2">
    <citation type="journal article" date="2007" name="Acta Crystallogr. F">
        <title>Purification, crystallization and preliminary X-ray diffraction studies of a putative UDP-N-acetyl-D-mannosamine dehydrogenase from Pyrococcus horikoshii OT3.</title>
        <authorList>
            <person name="Lokanath N.K."/>
            <person name="Pampa K.J."/>
            <person name="Kamiya T."/>
            <person name="Kunishima N."/>
        </authorList>
    </citation>
    <scope>CRYSTALLIZATION</scope>
    <scope>SUBUNIT</scope>
    <source>
        <strain>ATCC 700860 / DSM 12428 / JCM 9974 / NBRC 100139 / OT-3</strain>
    </source>
</reference>
<reference evidence="9" key="3">
    <citation type="journal article" date="2014" name="Biochem. Biophys. Res. Commun.">
        <title>Crystal structure of product-bound complex of UDP-N-acetyl-d-mannosamine dehydrogenase from Pyrococcus horikoshii OT3.</title>
        <authorList>
            <person name="Pampa K.J."/>
            <person name="Lokanath N.K."/>
            <person name="Girish T.U."/>
            <person name="Kunishima N."/>
            <person name="Rai V.R."/>
        </authorList>
    </citation>
    <scope>X-RAY CRYSTALLOGRAPHY (1.55 ANGSTROMS) IN COMPLEX WITH THE PRODUCT UDP-D-MANNACA</scope>
    <scope>FUNCTION</scope>
    <scope>DOMAIN</scope>
    <scope>ACTIVE SITE</scope>
    <source>
        <strain>ATCC 700860 / DSM 12428 / JCM 9974 / NBRC 100139 / OT-3</strain>
    </source>
</reference>
<name>WECC_PYRHO</name>
<dbReference type="EC" id="1.1.1.336" evidence="2"/>
<dbReference type="EMBL" id="BA000001">
    <property type="protein sequence ID" value="BAA30730.1"/>
    <property type="molecule type" value="Genomic_DNA"/>
</dbReference>
<dbReference type="PIR" id="B71041">
    <property type="entry name" value="B71041"/>
</dbReference>
<dbReference type="RefSeq" id="WP_010885691.1">
    <property type="nucleotide sequence ID" value="NC_000961.1"/>
</dbReference>
<dbReference type="PDB" id="4R16">
    <property type="method" value="X-ray"/>
    <property type="resolution" value="1.55 A"/>
    <property type="chains" value="A/B=1-418"/>
</dbReference>
<dbReference type="PDBsum" id="4R16"/>
<dbReference type="SMR" id="O59284"/>
<dbReference type="STRING" id="70601.gene:9378608"/>
<dbReference type="EnsemblBacteria" id="BAA30730">
    <property type="protein sequence ID" value="BAA30730"/>
    <property type="gene ID" value="BAA30730"/>
</dbReference>
<dbReference type="GeneID" id="1442470"/>
<dbReference type="KEGG" id="pho:PH1618"/>
<dbReference type="eggNOG" id="arCOG00252">
    <property type="taxonomic scope" value="Archaea"/>
</dbReference>
<dbReference type="OrthoDB" id="372050at2157"/>
<dbReference type="BRENDA" id="1.1.1.336">
    <property type="organism ID" value="5244"/>
</dbReference>
<dbReference type="EvolutionaryTrace" id="O59284"/>
<dbReference type="Proteomes" id="UP000000752">
    <property type="component" value="Chromosome"/>
</dbReference>
<dbReference type="GO" id="GO:0051287">
    <property type="term" value="F:NAD binding"/>
    <property type="evidence" value="ECO:0007669"/>
    <property type="project" value="InterPro"/>
</dbReference>
<dbReference type="GO" id="GO:0016628">
    <property type="term" value="F:oxidoreductase activity, acting on the CH-CH group of donors, NAD or NADP as acceptor"/>
    <property type="evidence" value="ECO:0007669"/>
    <property type="project" value="InterPro"/>
</dbReference>
<dbReference type="GO" id="GO:0089714">
    <property type="term" value="F:UDP-N-acetyl-D-mannosamine dehydrogenase activity"/>
    <property type="evidence" value="ECO:0007669"/>
    <property type="project" value="UniProtKB-EC"/>
</dbReference>
<dbReference type="GO" id="GO:0000271">
    <property type="term" value="P:polysaccharide biosynthetic process"/>
    <property type="evidence" value="ECO:0007669"/>
    <property type="project" value="InterPro"/>
</dbReference>
<dbReference type="Gene3D" id="3.40.50.720">
    <property type="entry name" value="NAD(P)-binding Rossmann-like Domain"/>
    <property type="match status" value="2"/>
</dbReference>
<dbReference type="InterPro" id="IPR008927">
    <property type="entry name" value="6-PGluconate_DH-like_C_sf"/>
</dbReference>
<dbReference type="InterPro" id="IPR036291">
    <property type="entry name" value="NAD(P)-bd_dom_sf"/>
</dbReference>
<dbReference type="InterPro" id="IPR017476">
    <property type="entry name" value="UDP-Glc/GDP-Man"/>
</dbReference>
<dbReference type="InterPro" id="IPR014027">
    <property type="entry name" value="UDP-Glc/GDP-Man_DH_C"/>
</dbReference>
<dbReference type="InterPro" id="IPR036220">
    <property type="entry name" value="UDP-Glc/GDP-Man_DH_C_sf"/>
</dbReference>
<dbReference type="InterPro" id="IPR014026">
    <property type="entry name" value="UDP-Glc/GDP-Man_DH_dimer"/>
</dbReference>
<dbReference type="InterPro" id="IPR001732">
    <property type="entry name" value="UDP-Glc/GDP-Man_DH_N"/>
</dbReference>
<dbReference type="InterPro" id="IPR053627">
    <property type="entry name" value="UDP-sugar_DH"/>
</dbReference>
<dbReference type="InterPro" id="IPR028359">
    <property type="entry name" value="UDP_ManNAc/GlcNAc_DH"/>
</dbReference>
<dbReference type="NCBIfam" id="TIGR03026">
    <property type="entry name" value="NDP-sugDHase"/>
    <property type="match status" value="1"/>
</dbReference>
<dbReference type="NCBIfam" id="NF040825">
    <property type="entry name" value="UDPMaNacDH_Arch"/>
    <property type="match status" value="1"/>
</dbReference>
<dbReference type="PANTHER" id="PTHR43491">
    <property type="entry name" value="UDP-N-ACETYL-D-MANNOSAMINE DEHYDROGENASE"/>
    <property type="match status" value="1"/>
</dbReference>
<dbReference type="PANTHER" id="PTHR43491:SF2">
    <property type="entry name" value="UDP-N-ACETYL-D-MANNOSAMINE DEHYDROGENASE"/>
    <property type="match status" value="1"/>
</dbReference>
<dbReference type="Pfam" id="PF00984">
    <property type="entry name" value="UDPG_MGDP_dh"/>
    <property type="match status" value="1"/>
</dbReference>
<dbReference type="Pfam" id="PF03720">
    <property type="entry name" value="UDPG_MGDP_dh_C"/>
    <property type="match status" value="1"/>
</dbReference>
<dbReference type="Pfam" id="PF03721">
    <property type="entry name" value="UDPG_MGDP_dh_N"/>
    <property type="match status" value="1"/>
</dbReference>
<dbReference type="PIRSF" id="PIRSF500136">
    <property type="entry name" value="UDP_ManNAc_DH"/>
    <property type="match status" value="1"/>
</dbReference>
<dbReference type="PIRSF" id="PIRSF000124">
    <property type="entry name" value="UDPglc_GDPman_dh"/>
    <property type="match status" value="1"/>
</dbReference>
<dbReference type="SMART" id="SM00984">
    <property type="entry name" value="UDPG_MGDP_dh_C"/>
    <property type="match status" value="1"/>
</dbReference>
<dbReference type="SUPFAM" id="SSF48179">
    <property type="entry name" value="6-phosphogluconate dehydrogenase C-terminal domain-like"/>
    <property type="match status" value="1"/>
</dbReference>
<dbReference type="SUPFAM" id="SSF51735">
    <property type="entry name" value="NAD(P)-binding Rossmann-fold domains"/>
    <property type="match status" value="1"/>
</dbReference>
<dbReference type="SUPFAM" id="SSF52413">
    <property type="entry name" value="UDP-glucose/GDP-mannose dehydrogenase C-terminal domain"/>
    <property type="match status" value="1"/>
</dbReference>
<protein>
    <recommendedName>
        <fullName evidence="5">UDP-N-acetyl-D-mannosamine dehydrogenase</fullName>
        <shortName evidence="5">UDP-D-ManNAcDH</shortName>
        <ecNumber evidence="2">1.1.1.336</ecNumber>
    </recommendedName>
    <alternativeName>
        <fullName evidence="6">UDP-ManNAc 6-dehydrogenase</fullName>
    </alternativeName>
</protein>
<organism>
    <name type="scientific">Pyrococcus horikoshii (strain ATCC 700860 / DSM 12428 / JCM 9974 / NBRC 100139 / OT-3)</name>
    <dbReference type="NCBI Taxonomy" id="70601"/>
    <lineage>
        <taxon>Archaea</taxon>
        <taxon>Methanobacteriati</taxon>
        <taxon>Methanobacteriota</taxon>
        <taxon>Thermococci</taxon>
        <taxon>Thermococcales</taxon>
        <taxon>Thermococcaceae</taxon>
        <taxon>Pyrococcus</taxon>
    </lineage>
</organism>
<proteinExistence type="evidence at protein level"/>
<gene>
    <name evidence="8" type="ordered locus">PH1618</name>
</gene>
<feature type="chain" id="PRO_0000443382" description="UDP-N-acetyl-D-mannosamine dehydrogenase">
    <location>
        <begin position="1"/>
        <end position="418"/>
    </location>
</feature>
<feature type="active site" description="Proton donor/acceptor" evidence="7">
    <location>
        <position position="204"/>
    </location>
</feature>
<feature type="active site" description="Nucleophile" evidence="7">
    <location>
        <position position="258"/>
    </location>
</feature>
<feature type="binding site" description="in chain A" evidence="1">
    <location>
        <position position="10"/>
    </location>
    <ligand>
        <name>NAD(+)</name>
        <dbReference type="ChEBI" id="CHEBI:57540"/>
        <note>ligand shared between homodimeric partners</note>
    </ligand>
</feature>
<feature type="binding site" description="in chain A" evidence="1">
    <location>
        <position position="11"/>
    </location>
    <ligand>
        <name>NAD(+)</name>
        <dbReference type="ChEBI" id="CHEBI:57540"/>
        <note>ligand shared between homodimeric partners</note>
    </ligand>
</feature>
<feature type="binding site" description="in chain A" evidence="1">
    <location>
        <position position="30"/>
    </location>
    <ligand>
        <name>NAD(+)</name>
        <dbReference type="ChEBI" id="CHEBI:57540"/>
        <note>ligand shared between homodimeric partners</note>
    </ligand>
</feature>
<feature type="binding site" description="in chain A" evidence="1">
    <location>
        <position position="85"/>
    </location>
    <ligand>
        <name>NAD(+)</name>
        <dbReference type="ChEBI" id="CHEBI:57540"/>
        <note>ligand shared between homodimeric partners</note>
    </ligand>
</feature>
<feature type="binding site" description="in chain A" evidence="1">
    <location>
        <position position="119"/>
    </location>
    <ligand>
        <name>NAD(+)</name>
        <dbReference type="ChEBI" id="CHEBI:57540"/>
        <note>ligand shared between homodimeric partners</note>
    </ligand>
</feature>
<feature type="binding site" description="in chain A" evidence="4 9">
    <location>
        <position position="152"/>
    </location>
    <ligand>
        <name>UDP-N-acetyl-alpha-D-mannosaminouronate</name>
        <dbReference type="ChEBI" id="CHEBI:70731"/>
        <note>ligand shared between homodimeric partners</note>
    </ligand>
</feature>
<feature type="binding site" description="in chain A" evidence="4 9">
    <location>
        <position position="153"/>
    </location>
    <ligand>
        <name>UDP-N-acetyl-alpha-D-mannosaminouronate</name>
        <dbReference type="ChEBI" id="CHEBI:70731"/>
        <note>ligand shared between homodimeric partners</note>
    </ligand>
</feature>
<feature type="binding site" description="in chain A" evidence="4 9">
    <location>
        <position position="204"/>
    </location>
    <ligand>
        <name>UDP-N-acetyl-alpha-D-mannosaminouronate</name>
        <dbReference type="ChEBI" id="CHEBI:70731"/>
        <note>ligand shared between homodimeric partners</note>
    </ligand>
</feature>
<feature type="binding site" description="in chain A" evidence="4 9">
    <location>
        <position position="208"/>
    </location>
    <ligand>
        <name>UDP-N-acetyl-alpha-D-mannosaminouronate</name>
        <dbReference type="ChEBI" id="CHEBI:70731"/>
        <note>ligand shared between homodimeric partners</note>
    </ligand>
</feature>
<feature type="binding site" description="in chain A" evidence="4 9">
    <location>
        <position position="211"/>
    </location>
    <ligand>
        <name>UDP-N-acetyl-alpha-D-mannosaminouronate</name>
        <dbReference type="ChEBI" id="CHEBI:70731"/>
        <note>ligand shared between homodimeric partners</note>
    </ligand>
</feature>
<feature type="binding site" description="in chain B" evidence="4 9">
    <location>
        <position position="242"/>
    </location>
    <ligand>
        <name>UDP-N-acetyl-alpha-D-mannosaminouronate</name>
        <dbReference type="ChEBI" id="CHEBI:70731"/>
        <note>ligand shared between homodimeric partners</note>
    </ligand>
</feature>
<feature type="binding site" description="in chain B" evidence="4 9">
    <location>
        <position position="244"/>
    </location>
    <ligand>
        <name>UDP-N-acetyl-alpha-D-mannosaminouronate</name>
        <dbReference type="ChEBI" id="CHEBI:70731"/>
        <note>ligand shared between homodimeric partners</note>
    </ligand>
</feature>
<feature type="binding site" description="in chain A" evidence="4 9">
    <location>
        <position position="249"/>
    </location>
    <ligand>
        <name>UDP-N-acetyl-alpha-D-mannosaminouronate</name>
        <dbReference type="ChEBI" id="CHEBI:70731"/>
        <note>ligand shared between homodimeric partners</note>
    </ligand>
</feature>
<feature type="binding site" description="in chain A" evidence="4 9">
    <location>
        <position position="255"/>
    </location>
    <ligand>
        <name>UDP-N-acetyl-alpha-D-mannosaminouronate</name>
        <dbReference type="ChEBI" id="CHEBI:70731"/>
        <note>ligand shared between homodimeric partners</note>
    </ligand>
</feature>
<feature type="binding site" description="in chain B" evidence="1">
    <location>
        <position position="261"/>
    </location>
    <ligand>
        <name>NAD(+)</name>
        <dbReference type="ChEBI" id="CHEBI:57540"/>
        <note>ligand shared between homodimeric partners</note>
    </ligand>
</feature>
<feature type="binding site" description="in chain A" evidence="4 9">
    <location>
        <position position="318"/>
    </location>
    <ligand>
        <name>UDP-N-acetyl-alpha-D-mannosaminouronate</name>
        <dbReference type="ChEBI" id="CHEBI:70731"/>
        <note>ligand shared between homodimeric partners</note>
    </ligand>
</feature>
<feature type="binding site" description="in chain A" evidence="4 9">
    <location>
        <position position="319"/>
    </location>
    <ligand>
        <name>UDP-N-acetyl-alpha-D-mannosaminouronate</name>
        <dbReference type="ChEBI" id="CHEBI:70731"/>
        <note>ligand shared between homodimeric partners</note>
    </ligand>
</feature>
<feature type="binding site" description="in chain B" evidence="1">
    <location>
        <position position="326"/>
    </location>
    <ligand>
        <name>NAD(+)</name>
        <dbReference type="ChEBI" id="CHEBI:57540"/>
        <note>ligand shared between homodimeric partners</note>
    </ligand>
</feature>
<feature type="binding site" description="in chain A" evidence="4 9">
    <location>
        <position position="398"/>
    </location>
    <ligand>
        <name>UDP-N-acetyl-alpha-D-mannosaminouronate</name>
        <dbReference type="ChEBI" id="CHEBI:70731"/>
        <note>ligand shared between homodimeric partners</note>
    </ligand>
</feature>
<feature type="strand" evidence="10">
    <location>
        <begin position="2"/>
        <end position="6"/>
    </location>
</feature>
<feature type="helix" evidence="10">
    <location>
        <begin position="12"/>
        <end position="20"/>
    </location>
</feature>
<feature type="turn" evidence="10">
    <location>
        <begin position="21"/>
        <end position="23"/>
    </location>
</feature>
<feature type="strand" evidence="10">
    <location>
        <begin position="25"/>
        <end position="29"/>
    </location>
</feature>
<feature type="helix" evidence="10">
    <location>
        <begin position="33"/>
        <end position="40"/>
    </location>
</feature>
<feature type="helix" evidence="10">
    <location>
        <begin position="51"/>
        <end position="60"/>
    </location>
</feature>
<feature type="strand" evidence="10">
    <location>
        <begin position="64"/>
        <end position="68"/>
    </location>
</feature>
<feature type="helix" evidence="10">
    <location>
        <begin position="70"/>
        <end position="73"/>
    </location>
</feature>
<feature type="strand" evidence="10">
    <location>
        <begin position="77"/>
        <end position="81"/>
    </location>
</feature>
<feature type="helix" evidence="10">
    <location>
        <begin position="95"/>
        <end position="107"/>
    </location>
</feature>
<feature type="strand" evidence="10">
    <location>
        <begin position="113"/>
        <end position="116"/>
    </location>
</feature>
<feature type="helix" evidence="10">
    <location>
        <begin position="124"/>
        <end position="136"/>
    </location>
</feature>
<feature type="turn" evidence="10">
    <location>
        <begin position="140"/>
        <end position="142"/>
    </location>
</feature>
<feature type="strand" evidence="10">
    <location>
        <begin position="145"/>
        <end position="148"/>
    </location>
</feature>
<feature type="helix" evidence="10">
    <location>
        <begin position="158"/>
        <end position="164"/>
    </location>
</feature>
<feature type="strand" evidence="10">
    <location>
        <begin position="167"/>
        <end position="173"/>
    </location>
</feature>
<feature type="helix" evidence="10">
    <location>
        <begin position="174"/>
        <end position="184"/>
    </location>
</feature>
<feature type="turn" evidence="10">
    <location>
        <begin position="185"/>
        <end position="187"/>
    </location>
</feature>
<feature type="strand" evidence="10">
    <location>
        <begin position="192"/>
        <end position="196"/>
    </location>
</feature>
<feature type="helix" evidence="10">
    <location>
        <begin position="197"/>
        <end position="228"/>
    </location>
</feature>
<feature type="helix" evidence="10">
    <location>
        <begin position="232"/>
        <end position="239"/>
    </location>
</feature>
<feature type="strand" evidence="10">
    <location>
        <begin position="256"/>
        <end position="258"/>
    </location>
</feature>
<feature type="turn" evidence="10">
    <location>
        <begin position="259"/>
        <end position="261"/>
    </location>
</feature>
<feature type="helix" evidence="10">
    <location>
        <begin position="262"/>
        <end position="267"/>
    </location>
</feature>
<feature type="helix" evidence="10">
    <location>
        <begin position="276"/>
        <end position="285"/>
    </location>
</feature>
<feature type="helix" evidence="10">
    <location>
        <begin position="287"/>
        <end position="301"/>
    </location>
</feature>
<feature type="helix" evidence="10">
    <location>
        <begin position="306"/>
        <end position="308"/>
    </location>
</feature>
<feature type="strand" evidence="10">
    <location>
        <begin position="310"/>
        <end position="314"/>
    </location>
</feature>
<feature type="strand" evidence="10">
    <location>
        <begin position="317"/>
        <end position="319"/>
    </location>
</feature>
<feature type="helix" evidence="10">
    <location>
        <begin position="329"/>
        <end position="337"/>
    </location>
</feature>
<feature type="turn" evidence="10">
    <location>
        <begin position="338"/>
        <end position="340"/>
    </location>
</feature>
<feature type="strand" evidence="10">
    <location>
        <begin position="341"/>
        <end position="347"/>
    </location>
</feature>
<feature type="strand" evidence="10">
    <location>
        <begin position="349"/>
        <end position="351"/>
    </location>
</feature>
<feature type="strand" evidence="10">
    <location>
        <begin position="354"/>
        <end position="357"/>
    </location>
</feature>
<feature type="helix" evidence="10">
    <location>
        <begin position="358"/>
        <end position="362"/>
    </location>
</feature>
<feature type="strand" evidence="10">
    <location>
        <begin position="366"/>
        <end position="370"/>
    </location>
</feature>
<feature type="helix" evidence="10">
    <location>
        <begin position="375"/>
        <end position="379"/>
    </location>
</feature>
<feature type="helix" evidence="10">
    <location>
        <begin position="382"/>
        <end position="387"/>
    </location>
</feature>
<feature type="strand" evidence="10">
    <location>
        <begin position="389"/>
        <end position="391"/>
    </location>
</feature>
<feature type="strand" evidence="10">
    <location>
        <begin position="393"/>
        <end position="399"/>
    </location>
</feature>
<feature type="strand" evidence="10">
    <location>
        <begin position="409"/>
        <end position="412"/>
    </location>
</feature>